<protein>
    <recommendedName>
        <fullName evidence="1">HMP-PP phosphatase</fullName>
        <ecNumber evidence="1">3.6.1.-</ecNumber>
    </recommendedName>
</protein>
<accession>B2K6W6</accession>
<sequence>MYRLAAFDMDGTLLMRDHKIGSITLNALHQLADAGVTLTFATGRHYLDMKGILSHSGLNGYLITGNSTRVCDAEGNPLYGMDLPAELVEFVLRTPWQTNASIHLFRDDGWFTDRNDPDLLIAHTTSGFHFQLTEWDELPLTGNHKFCFIASHQELVELKAQLEQQMSGEADFCFSATDCLEVLPRGCNKGVALEKLSHHLDLTLADCMAFGDAMNDKEMLSRVGRGLVMGNALPQLKQELPQLQIIGRCEQQGVAHYLHHWLSSPHLTYSPEF</sequence>
<evidence type="ECO:0000255" key="1">
    <source>
        <dbReference type="HAMAP-Rule" id="MF_01847"/>
    </source>
</evidence>
<organism>
    <name type="scientific">Yersinia pseudotuberculosis serotype IB (strain PB1/+)</name>
    <dbReference type="NCBI Taxonomy" id="502801"/>
    <lineage>
        <taxon>Bacteria</taxon>
        <taxon>Pseudomonadati</taxon>
        <taxon>Pseudomonadota</taxon>
        <taxon>Gammaproteobacteria</taxon>
        <taxon>Enterobacterales</taxon>
        <taxon>Yersiniaceae</taxon>
        <taxon>Yersinia</taxon>
    </lineage>
</organism>
<keyword id="KW-0378">Hydrolase</keyword>
<keyword id="KW-0460">Magnesium</keyword>
<keyword id="KW-0479">Metal-binding</keyword>
<reference key="1">
    <citation type="submission" date="2008-04" db="EMBL/GenBank/DDBJ databases">
        <title>Complete sequence of Yersinia pseudotuberculosis PB1/+.</title>
        <authorList>
            <person name="Copeland A."/>
            <person name="Lucas S."/>
            <person name="Lapidus A."/>
            <person name="Glavina del Rio T."/>
            <person name="Dalin E."/>
            <person name="Tice H."/>
            <person name="Bruce D."/>
            <person name="Goodwin L."/>
            <person name="Pitluck S."/>
            <person name="Munk A.C."/>
            <person name="Brettin T."/>
            <person name="Detter J.C."/>
            <person name="Han C."/>
            <person name="Tapia R."/>
            <person name="Schmutz J."/>
            <person name="Larimer F."/>
            <person name="Land M."/>
            <person name="Hauser L."/>
            <person name="Challacombe J.F."/>
            <person name="Green L."/>
            <person name="Lindler L.E."/>
            <person name="Nikolich M.P."/>
            <person name="Richardson P."/>
        </authorList>
    </citation>
    <scope>NUCLEOTIDE SEQUENCE [LARGE SCALE GENOMIC DNA]</scope>
    <source>
        <strain>PB1/+</strain>
    </source>
</reference>
<feature type="chain" id="PRO_1000188515" description="HMP-PP phosphatase">
    <location>
        <begin position="1"/>
        <end position="273"/>
    </location>
</feature>
<feature type="active site" description="Nucleophile" evidence="1">
    <location>
        <position position="8"/>
    </location>
</feature>
<feature type="binding site" evidence="1">
    <location>
        <position position="8"/>
    </location>
    <ligand>
        <name>Mg(2+)</name>
        <dbReference type="ChEBI" id="CHEBI:18420"/>
    </ligand>
</feature>
<feature type="binding site" evidence="1">
    <location>
        <position position="10"/>
    </location>
    <ligand>
        <name>Mg(2+)</name>
        <dbReference type="ChEBI" id="CHEBI:18420"/>
    </ligand>
</feature>
<feature type="binding site" evidence="1">
    <location>
        <position position="212"/>
    </location>
    <ligand>
        <name>Mg(2+)</name>
        <dbReference type="ChEBI" id="CHEBI:18420"/>
    </ligand>
</feature>
<proteinExistence type="inferred from homology"/>
<comment type="function">
    <text evidence="1">Catalyzes the hydrolysis of 4-amino-2-methyl-5-hydroxymethylpyrimidine pyrophosphate (HMP-PP) to 4-amino-2-methyl-5-hydroxymethylpyrimidine phosphate (HMP-P).</text>
</comment>
<comment type="catalytic activity">
    <reaction evidence="1">
        <text>4-amino-2-methyl-5-(diphosphooxymethyl)pyrimidine + H2O = 4-amino-2-methyl-5-(phosphooxymethyl)pyrimidine + phosphate + H(+)</text>
        <dbReference type="Rhea" id="RHEA:27914"/>
        <dbReference type="ChEBI" id="CHEBI:15377"/>
        <dbReference type="ChEBI" id="CHEBI:15378"/>
        <dbReference type="ChEBI" id="CHEBI:43474"/>
        <dbReference type="ChEBI" id="CHEBI:57841"/>
        <dbReference type="ChEBI" id="CHEBI:58354"/>
    </reaction>
</comment>
<comment type="cofactor">
    <cofactor evidence="1">
        <name>Mg(2+)</name>
        <dbReference type="ChEBI" id="CHEBI:18420"/>
    </cofactor>
</comment>
<comment type="similarity">
    <text evidence="1">Belongs to the HAD-like hydrolase superfamily. Cof family.</text>
</comment>
<gene>
    <name evidence="1" type="primary">cof</name>
    <name type="ordered locus">YPTS_1009</name>
</gene>
<name>COF_YERPB</name>
<dbReference type="EC" id="3.6.1.-" evidence="1"/>
<dbReference type="EMBL" id="CP001048">
    <property type="protein sequence ID" value="ACC87990.1"/>
    <property type="molecule type" value="Genomic_DNA"/>
</dbReference>
<dbReference type="RefSeq" id="WP_012413511.1">
    <property type="nucleotide sequence ID" value="NZ_CP009780.1"/>
</dbReference>
<dbReference type="SMR" id="B2K6W6"/>
<dbReference type="KEGG" id="ypb:YPTS_1009"/>
<dbReference type="PATRIC" id="fig|502801.10.peg.352"/>
<dbReference type="GO" id="GO:0002145">
    <property type="term" value="F:4-amino-5-hydroxymethyl-2-methylpyrimidine diphosphatase activity"/>
    <property type="evidence" value="ECO:0007669"/>
    <property type="project" value="RHEA"/>
</dbReference>
<dbReference type="GO" id="GO:0000287">
    <property type="term" value="F:magnesium ion binding"/>
    <property type="evidence" value="ECO:0000250"/>
    <property type="project" value="UniProtKB"/>
</dbReference>
<dbReference type="GO" id="GO:0016791">
    <property type="term" value="F:phosphatase activity"/>
    <property type="evidence" value="ECO:0000250"/>
    <property type="project" value="UniProtKB"/>
</dbReference>
<dbReference type="CDD" id="cd07516">
    <property type="entry name" value="HAD_Pase"/>
    <property type="match status" value="1"/>
</dbReference>
<dbReference type="FunFam" id="3.30.1240.10:FF:000018">
    <property type="entry name" value="HMP-PP phosphatase"/>
    <property type="match status" value="1"/>
</dbReference>
<dbReference type="Gene3D" id="3.30.1240.10">
    <property type="match status" value="1"/>
</dbReference>
<dbReference type="Gene3D" id="3.40.50.1000">
    <property type="entry name" value="HAD superfamily/HAD-like"/>
    <property type="match status" value="1"/>
</dbReference>
<dbReference type="HAMAP" id="MF_01847">
    <property type="entry name" value="HMP_PP_phosphat"/>
    <property type="match status" value="1"/>
</dbReference>
<dbReference type="InterPro" id="IPR000150">
    <property type="entry name" value="Cof"/>
</dbReference>
<dbReference type="InterPro" id="IPR036412">
    <property type="entry name" value="HAD-like_sf"/>
</dbReference>
<dbReference type="InterPro" id="IPR006379">
    <property type="entry name" value="HAD-SF_hydro_IIB"/>
</dbReference>
<dbReference type="InterPro" id="IPR023214">
    <property type="entry name" value="HAD_sf"/>
</dbReference>
<dbReference type="InterPro" id="IPR023938">
    <property type="entry name" value="HMP-PP_phosphatase"/>
</dbReference>
<dbReference type="NCBIfam" id="TIGR00099">
    <property type="entry name" value="Cof-subfamily"/>
    <property type="match status" value="1"/>
</dbReference>
<dbReference type="NCBIfam" id="TIGR01484">
    <property type="entry name" value="HAD-SF-IIB"/>
    <property type="match status" value="1"/>
</dbReference>
<dbReference type="NCBIfam" id="NF011705">
    <property type="entry name" value="PRK15126.1"/>
    <property type="match status" value="1"/>
</dbReference>
<dbReference type="PANTHER" id="PTHR47267">
    <property type="match status" value="1"/>
</dbReference>
<dbReference type="PANTHER" id="PTHR47267:SF2">
    <property type="entry name" value="HMP-PP PHOSPHATASE"/>
    <property type="match status" value="1"/>
</dbReference>
<dbReference type="Pfam" id="PF08282">
    <property type="entry name" value="Hydrolase_3"/>
    <property type="match status" value="1"/>
</dbReference>
<dbReference type="SFLD" id="SFLDG01140">
    <property type="entry name" value="C2.B:_Phosphomannomutase_and_P"/>
    <property type="match status" value="1"/>
</dbReference>
<dbReference type="SFLD" id="SFLDS00003">
    <property type="entry name" value="Haloacid_Dehalogenase"/>
    <property type="match status" value="1"/>
</dbReference>
<dbReference type="SUPFAM" id="SSF56784">
    <property type="entry name" value="HAD-like"/>
    <property type="match status" value="1"/>
</dbReference>
<dbReference type="PROSITE" id="PS01228">
    <property type="entry name" value="COF_1"/>
    <property type="match status" value="1"/>
</dbReference>
<dbReference type="PROSITE" id="PS01229">
    <property type="entry name" value="COF_2"/>
    <property type="match status" value="1"/>
</dbReference>